<name>DBP8_ASPOR</name>
<comment type="function">
    <text evidence="1">ATP-binding RNA helicase involved in 40S ribosomal subunit biogenesis and is required for the normal formation of 18S rRNAs through pre-rRNA processing at A0, A1 and A2 sites. Required for vegetative growth (By similarity).</text>
</comment>
<comment type="catalytic activity">
    <reaction>
        <text>ATP + H2O = ADP + phosphate + H(+)</text>
        <dbReference type="Rhea" id="RHEA:13065"/>
        <dbReference type="ChEBI" id="CHEBI:15377"/>
        <dbReference type="ChEBI" id="CHEBI:15378"/>
        <dbReference type="ChEBI" id="CHEBI:30616"/>
        <dbReference type="ChEBI" id="CHEBI:43474"/>
        <dbReference type="ChEBI" id="CHEBI:456216"/>
        <dbReference type="EC" id="3.6.4.13"/>
    </reaction>
</comment>
<comment type="subcellular location">
    <subcellularLocation>
        <location evidence="1">Nucleus</location>
        <location evidence="1">Nucleolus</location>
    </subcellularLocation>
</comment>
<comment type="domain">
    <text>The Q motif is unique to and characteristic of the DEAD box family of RNA helicases and controls ATP binding and hydrolysis.</text>
</comment>
<comment type="similarity">
    <text evidence="4">Belongs to the DEAD box helicase family. DDX49/DBP8 subfamily.</text>
</comment>
<reference key="1">
    <citation type="journal article" date="2005" name="Nature">
        <title>Genome sequencing and analysis of Aspergillus oryzae.</title>
        <authorList>
            <person name="Machida M."/>
            <person name="Asai K."/>
            <person name="Sano M."/>
            <person name="Tanaka T."/>
            <person name="Kumagai T."/>
            <person name="Terai G."/>
            <person name="Kusumoto K."/>
            <person name="Arima T."/>
            <person name="Akita O."/>
            <person name="Kashiwagi Y."/>
            <person name="Abe K."/>
            <person name="Gomi K."/>
            <person name="Horiuchi H."/>
            <person name="Kitamoto K."/>
            <person name="Kobayashi T."/>
            <person name="Takeuchi M."/>
            <person name="Denning D.W."/>
            <person name="Galagan J.E."/>
            <person name="Nierman W.C."/>
            <person name="Yu J."/>
            <person name="Archer D.B."/>
            <person name="Bennett J.W."/>
            <person name="Bhatnagar D."/>
            <person name="Cleveland T.E."/>
            <person name="Fedorova N.D."/>
            <person name="Gotoh O."/>
            <person name="Horikawa H."/>
            <person name="Hosoyama A."/>
            <person name="Ichinomiya M."/>
            <person name="Igarashi R."/>
            <person name="Iwashita K."/>
            <person name="Juvvadi P.R."/>
            <person name="Kato M."/>
            <person name="Kato Y."/>
            <person name="Kin T."/>
            <person name="Kokubun A."/>
            <person name="Maeda H."/>
            <person name="Maeyama N."/>
            <person name="Maruyama J."/>
            <person name="Nagasaki H."/>
            <person name="Nakajima T."/>
            <person name="Oda K."/>
            <person name="Okada K."/>
            <person name="Paulsen I."/>
            <person name="Sakamoto K."/>
            <person name="Sawano T."/>
            <person name="Takahashi M."/>
            <person name="Takase K."/>
            <person name="Terabayashi Y."/>
            <person name="Wortman J.R."/>
            <person name="Yamada O."/>
            <person name="Yamagata Y."/>
            <person name="Anazawa H."/>
            <person name="Hata Y."/>
            <person name="Koide Y."/>
            <person name="Komori T."/>
            <person name="Koyama Y."/>
            <person name="Minetoki T."/>
            <person name="Suharnan S."/>
            <person name="Tanaka A."/>
            <person name="Isono K."/>
            <person name="Kuhara S."/>
            <person name="Ogasawara N."/>
            <person name="Kikuchi H."/>
        </authorList>
    </citation>
    <scope>NUCLEOTIDE SEQUENCE [LARGE SCALE GENOMIC DNA]</scope>
    <source>
        <strain>ATCC 42149 / RIB 40</strain>
    </source>
</reference>
<feature type="chain" id="PRO_0000232282" description="ATP-dependent RNA helicase dbp8">
    <location>
        <begin position="1"/>
        <end position="443"/>
    </location>
</feature>
<feature type="domain" description="Helicase ATP-binding" evidence="2">
    <location>
        <begin position="44"/>
        <end position="223"/>
    </location>
</feature>
<feature type="domain" description="Helicase C-terminal" evidence="3">
    <location>
        <begin position="240"/>
        <end position="402"/>
    </location>
</feature>
<feature type="short sequence motif" description="Q motif">
    <location>
        <begin position="13"/>
        <end position="41"/>
    </location>
</feature>
<feature type="short sequence motif" description="DEAD box">
    <location>
        <begin position="166"/>
        <end position="169"/>
    </location>
</feature>
<feature type="binding site" evidence="2">
    <location>
        <begin position="57"/>
        <end position="64"/>
    </location>
    <ligand>
        <name>ATP</name>
        <dbReference type="ChEBI" id="CHEBI:30616"/>
    </ligand>
</feature>
<protein>
    <recommendedName>
        <fullName>ATP-dependent RNA helicase dbp8</fullName>
        <ecNumber>3.6.4.13</ecNumber>
    </recommendedName>
</protein>
<gene>
    <name type="primary">dbp8</name>
    <name type="ORF">AO090003000634</name>
</gene>
<organism>
    <name type="scientific">Aspergillus oryzae (strain ATCC 42149 / RIB 40)</name>
    <name type="common">Yellow koji mold</name>
    <dbReference type="NCBI Taxonomy" id="510516"/>
    <lineage>
        <taxon>Eukaryota</taxon>
        <taxon>Fungi</taxon>
        <taxon>Dikarya</taxon>
        <taxon>Ascomycota</taxon>
        <taxon>Pezizomycotina</taxon>
        <taxon>Eurotiomycetes</taxon>
        <taxon>Eurotiomycetidae</taxon>
        <taxon>Eurotiales</taxon>
        <taxon>Aspergillaceae</taxon>
        <taxon>Aspergillus</taxon>
        <taxon>Aspergillus subgen. Circumdati</taxon>
    </lineage>
</organism>
<sequence>MDYAICPRTKLNGFRTTLNVSPWLVGSLTTMAVRKPTAIQKACIPEILKGRDCIGGSRTGSGKTIAFAVPILQKWAQDPFGIFAVVLTPTRELALQIYEQIKAISAPQSMKPLLITGGTDMRSQALALSQRPHVVIATPGRLADHINTSGEDTVCGLKRVRMVVLDEADRLLAPGPGSMLPDVETCLSALPPSSERQTLLFTATLTPEVRALKSMPRAENKPPVFVTEISTENNGAIPPTLKQTYLKVPMTHREAFLHVLLSTERNSTKPAIIFCNHTKTADLLERMLRRLSHRVTSLHSLLPQSERNSNLARFRASAARILVATDVASRGLDIPSVSLVINFDVPRNPDDYVHRVGRTARAGRHGEAVTLVGQRDVQLVLAIEERVERRMEEWSEEGVSIEGRVVRGGVLKEVGEAKREASGEIEEGRDVLGRKRNKLKKVR</sequence>
<evidence type="ECO:0000250" key="1"/>
<evidence type="ECO:0000255" key="2">
    <source>
        <dbReference type="PROSITE-ProRule" id="PRU00541"/>
    </source>
</evidence>
<evidence type="ECO:0000255" key="3">
    <source>
        <dbReference type="PROSITE-ProRule" id="PRU00542"/>
    </source>
</evidence>
<evidence type="ECO:0000305" key="4"/>
<keyword id="KW-0067">ATP-binding</keyword>
<keyword id="KW-0347">Helicase</keyword>
<keyword id="KW-0378">Hydrolase</keyword>
<keyword id="KW-0547">Nucleotide-binding</keyword>
<keyword id="KW-0539">Nucleus</keyword>
<keyword id="KW-1185">Reference proteome</keyword>
<keyword id="KW-0690">Ribosome biogenesis</keyword>
<keyword id="KW-0694">RNA-binding</keyword>
<keyword id="KW-0698">rRNA processing</keyword>
<proteinExistence type="inferred from homology"/>
<accession>Q2UKX3</accession>
<dbReference type="EC" id="3.6.4.13"/>
<dbReference type="EMBL" id="BA000050">
    <property type="protein sequence ID" value="BAE57792.1"/>
    <property type="molecule type" value="Genomic_DNA"/>
</dbReference>
<dbReference type="SMR" id="Q2UKX3"/>
<dbReference type="STRING" id="510516.Q2UKX3"/>
<dbReference type="EnsemblFungi" id="BAE57792">
    <property type="protein sequence ID" value="BAE57792"/>
    <property type="gene ID" value="AO090003000634"/>
</dbReference>
<dbReference type="HOGENOM" id="CLU_003041_1_1_1"/>
<dbReference type="Proteomes" id="UP000006564">
    <property type="component" value="Chromosome 2"/>
</dbReference>
<dbReference type="GO" id="GO:0005829">
    <property type="term" value="C:cytosol"/>
    <property type="evidence" value="ECO:0007669"/>
    <property type="project" value="TreeGrafter"/>
</dbReference>
<dbReference type="GO" id="GO:0005730">
    <property type="term" value="C:nucleolus"/>
    <property type="evidence" value="ECO:0007669"/>
    <property type="project" value="UniProtKB-SubCell"/>
</dbReference>
<dbReference type="GO" id="GO:0005524">
    <property type="term" value="F:ATP binding"/>
    <property type="evidence" value="ECO:0007669"/>
    <property type="project" value="UniProtKB-KW"/>
</dbReference>
<dbReference type="GO" id="GO:0016887">
    <property type="term" value="F:ATP hydrolysis activity"/>
    <property type="evidence" value="ECO:0007669"/>
    <property type="project" value="RHEA"/>
</dbReference>
<dbReference type="GO" id="GO:0003723">
    <property type="term" value="F:RNA binding"/>
    <property type="evidence" value="ECO:0007669"/>
    <property type="project" value="UniProtKB-KW"/>
</dbReference>
<dbReference type="GO" id="GO:0003724">
    <property type="term" value="F:RNA helicase activity"/>
    <property type="evidence" value="ECO:0007669"/>
    <property type="project" value="UniProtKB-EC"/>
</dbReference>
<dbReference type="GO" id="GO:0006364">
    <property type="term" value="P:rRNA processing"/>
    <property type="evidence" value="ECO:0007669"/>
    <property type="project" value="UniProtKB-KW"/>
</dbReference>
<dbReference type="CDD" id="cd17955">
    <property type="entry name" value="DEADc_DDX49"/>
    <property type="match status" value="1"/>
</dbReference>
<dbReference type="CDD" id="cd18787">
    <property type="entry name" value="SF2_C_DEAD"/>
    <property type="match status" value="1"/>
</dbReference>
<dbReference type="Gene3D" id="3.40.50.300">
    <property type="entry name" value="P-loop containing nucleotide triphosphate hydrolases"/>
    <property type="match status" value="2"/>
</dbReference>
<dbReference type="InterPro" id="IPR011545">
    <property type="entry name" value="DEAD/DEAH_box_helicase_dom"/>
</dbReference>
<dbReference type="InterPro" id="IPR050079">
    <property type="entry name" value="DEAD_box_RNA_helicase"/>
</dbReference>
<dbReference type="InterPro" id="IPR014001">
    <property type="entry name" value="Helicase_ATP-bd"/>
</dbReference>
<dbReference type="InterPro" id="IPR001650">
    <property type="entry name" value="Helicase_C-like"/>
</dbReference>
<dbReference type="InterPro" id="IPR027417">
    <property type="entry name" value="P-loop_NTPase"/>
</dbReference>
<dbReference type="InterPro" id="IPR000629">
    <property type="entry name" value="RNA-helicase_DEAD-box_CS"/>
</dbReference>
<dbReference type="PANTHER" id="PTHR47959:SF24">
    <property type="entry name" value="ATP-DEPENDENT RNA HELICASE"/>
    <property type="match status" value="1"/>
</dbReference>
<dbReference type="PANTHER" id="PTHR47959">
    <property type="entry name" value="ATP-DEPENDENT RNA HELICASE RHLE-RELATED"/>
    <property type="match status" value="1"/>
</dbReference>
<dbReference type="Pfam" id="PF00270">
    <property type="entry name" value="DEAD"/>
    <property type="match status" value="1"/>
</dbReference>
<dbReference type="Pfam" id="PF00271">
    <property type="entry name" value="Helicase_C"/>
    <property type="match status" value="1"/>
</dbReference>
<dbReference type="SMART" id="SM00487">
    <property type="entry name" value="DEXDc"/>
    <property type="match status" value="1"/>
</dbReference>
<dbReference type="SMART" id="SM00490">
    <property type="entry name" value="HELICc"/>
    <property type="match status" value="1"/>
</dbReference>
<dbReference type="SUPFAM" id="SSF52540">
    <property type="entry name" value="P-loop containing nucleoside triphosphate hydrolases"/>
    <property type="match status" value="1"/>
</dbReference>
<dbReference type="PROSITE" id="PS00039">
    <property type="entry name" value="DEAD_ATP_HELICASE"/>
    <property type="match status" value="1"/>
</dbReference>
<dbReference type="PROSITE" id="PS51192">
    <property type="entry name" value="HELICASE_ATP_BIND_1"/>
    <property type="match status" value="1"/>
</dbReference>
<dbReference type="PROSITE" id="PS51194">
    <property type="entry name" value="HELICASE_CTER"/>
    <property type="match status" value="1"/>
</dbReference>
<dbReference type="PROSITE" id="PS51195">
    <property type="entry name" value="Q_MOTIF"/>
    <property type="match status" value="1"/>
</dbReference>